<proteinExistence type="inferred from homology"/>
<name>US15_HCMVA</name>
<accession>P09718</accession>
<accession>Q7M6I5</accession>
<keyword id="KW-0472">Membrane</keyword>
<keyword id="KW-1185">Reference proteome</keyword>
<keyword id="KW-0812">Transmembrane</keyword>
<keyword id="KW-1133">Transmembrane helix</keyword>
<protein>
    <recommendedName>
        <fullName>Uncharacterized protein HVLF3</fullName>
    </recommendedName>
</protein>
<evidence type="ECO:0000255" key="1"/>
<evidence type="ECO:0000305" key="2"/>
<sequence>MRREKGFQVPTDGTVIYVPPGIQETRLATRSLAWVDCCRVALHTYGAVGWQLAGLTALLSAFCYAAPATWFHHSRLCLTESSPSLVFVIPVTSVIFIHCYETSHPSNIGVLLFYTLLHVPPLIVICLCLDGTLVISAALFTLLAFLSCTGVALLAPERTVRRQIVVVHALITLTFTAIVVVILRRGWSWCFKIVLSFSVLITCLAVSHFHEAALAVRYETPLERALLAAVKVFLSLVFTLLMVLRIMTLRTFLQTYFSSDKL</sequence>
<gene>
    <name type="primary">US15</name>
</gene>
<feature type="chain" id="PRO_0000115274" description="Uncharacterized protein HVLF3">
    <location>
        <begin position="1"/>
        <end position="262"/>
    </location>
</feature>
<feature type="transmembrane region" description="Helical" evidence="1">
    <location>
        <begin position="46"/>
        <end position="66"/>
    </location>
</feature>
<feature type="transmembrane region" description="Helical" evidence="1">
    <location>
        <begin position="77"/>
        <end position="97"/>
    </location>
</feature>
<feature type="transmembrane region" description="Helical" evidence="1">
    <location>
        <begin position="108"/>
        <end position="128"/>
    </location>
</feature>
<feature type="transmembrane region" description="Helical" evidence="1">
    <location>
        <begin position="133"/>
        <end position="153"/>
    </location>
</feature>
<feature type="transmembrane region" description="Helical" evidence="1">
    <location>
        <begin position="163"/>
        <end position="183"/>
    </location>
</feature>
<feature type="transmembrane region" description="Helical" evidence="1">
    <location>
        <begin position="186"/>
        <end position="206"/>
    </location>
</feature>
<feature type="transmembrane region" description="Helical" evidence="1">
    <location>
        <begin position="226"/>
        <end position="246"/>
    </location>
</feature>
<dbReference type="EMBL" id="X17403">
    <property type="protein sequence ID" value="CAA35282.1"/>
    <property type="status" value="ALT_INIT"/>
    <property type="molecule type" value="Genomic_DNA"/>
</dbReference>
<dbReference type="EMBL" id="X04650">
    <property type="protein sequence ID" value="CAB37107.1"/>
    <property type="status" value="ALT_INIT"/>
    <property type="molecule type" value="Genomic_DNA"/>
</dbReference>
<dbReference type="EMBL" id="BK000394">
    <property type="protein sequence ID" value="DAA00203.1"/>
    <property type="molecule type" value="Genomic_DNA"/>
</dbReference>
<dbReference type="PIR" id="G27230">
    <property type="entry name" value="QQBEF7"/>
</dbReference>
<dbReference type="Proteomes" id="UP000008991">
    <property type="component" value="Segment"/>
</dbReference>
<dbReference type="Proteomes" id="UP000008992">
    <property type="component" value="Segment"/>
</dbReference>
<dbReference type="GO" id="GO:0016020">
    <property type="term" value="C:membrane"/>
    <property type="evidence" value="ECO:0007669"/>
    <property type="project" value="UniProtKB-SubCell"/>
</dbReference>
<dbReference type="InterPro" id="IPR006214">
    <property type="entry name" value="Bax_inhibitor_1-related"/>
</dbReference>
<dbReference type="Pfam" id="PF01027">
    <property type="entry name" value="Bax1-I"/>
    <property type="match status" value="1"/>
</dbReference>
<organismHost>
    <name type="scientific">Homo sapiens</name>
    <name type="common">Human</name>
    <dbReference type="NCBI Taxonomy" id="9606"/>
</organismHost>
<reference key="1">
    <citation type="journal article" date="1986" name="J. Mol. Biol.">
        <title>Sequence of the short unique region, short repeats, and part of the long repeats of human cytomegalovirus.</title>
        <authorList>
            <person name="Weston K.M."/>
            <person name="Barrell B.G."/>
        </authorList>
    </citation>
    <scope>NUCLEOTIDE SEQUENCE [GENOMIC DNA]</scope>
</reference>
<reference key="2">
    <citation type="journal article" date="1990" name="Curr. Top. Microbiol. Immunol.">
        <title>Analysis of the protein-coding content of the sequence of human cytomegalovirus strain AD169.</title>
        <authorList>
            <person name="Chee M.S."/>
            <person name="Bankier A.T."/>
            <person name="Beck S."/>
            <person name="Bohni R."/>
            <person name="Brown C.M."/>
            <person name="Cerny R."/>
            <person name="Horsnell T."/>
            <person name="Hutchison C.A. III"/>
            <person name="Kouzarides T."/>
            <person name="Martignetti J.A."/>
            <person name="Preddie E."/>
            <person name="Satchwell S.C."/>
            <person name="Tomlinson P."/>
            <person name="Weston K.M."/>
            <person name="Barrell B.G."/>
        </authorList>
    </citation>
    <scope>NUCLEOTIDE SEQUENCE [LARGE SCALE GENOMIC DNA]</scope>
</reference>
<reference key="3">
    <citation type="journal article" date="2003" name="J. Gen. Virol.">
        <title>The human cytomegalovirus genome revisited: comparison with the chimpanzee cytomegalovirus genome.</title>
        <authorList>
            <person name="Davison A.J."/>
            <person name="Dolan A."/>
            <person name="Akter P."/>
            <person name="Addison C."/>
            <person name="Dargan D.J."/>
            <person name="Alcendor D.J."/>
            <person name="McGeoch D.J."/>
            <person name="Hayward G.S."/>
        </authorList>
    </citation>
    <scope>GENOME REANNOTATION</scope>
</reference>
<reference key="4">
    <citation type="journal article" date="2003" name="J. Gen. Virol.">
        <authorList>
            <person name="Davison A.J."/>
            <person name="Dolan A."/>
            <person name="Akter P."/>
            <person name="Addison C."/>
            <person name="Dargan D.J."/>
            <person name="Alcendor D.J."/>
            <person name="McGeoch D.J."/>
            <person name="Hayward G.S."/>
        </authorList>
    </citation>
    <scope>ERRATUM OF PUBMED:12533697</scope>
</reference>
<organism>
    <name type="scientific">Human cytomegalovirus (strain AD169)</name>
    <name type="common">HHV-5</name>
    <name type="synonym">Human herpesvirus 5</name>
    <dbReference type="NCBI Taxonomy" id="10360"/>
    <lineage>
        <taxon>Viruses</taxon>
        <taxon>Duplodnaviria</taxon>
        <taxon>Heunggongvirae</taxon>
        <taxon>Peploviricota</taxon>
        <taxon>Herviviricetes</taxon>
        <taxon>Herpesvirales</taxon>
        <taxon>Orthoherpesviridae</taxon>
        <taxon>Betaherpesvirinae</taxon>
        <taxon>Cytomegalovirus</taxon>
        <taxon>Cytomegalovirus humanbeta5</taxon>
        <taxon>Human cytomegalovirus</taxon>
    </lineage>
</organism>
<comment type="subcellular location">
    <subcellularLocation>
        <location evidence="2">Membrane</location>
        <topology evidence="2">Multi-pass membrane protein</topology>
    </subcellularLocation>
</comment>
<comment type="similarity">
    <text evidence="2">Belongs to the cytomegalovirus US12 family.</text>
</comment>
<comment type="sequence caution" evidence="2">
    <conflict type="erroneous initiation">
        <sequence resource="EMBL-CDS" id="CAA35282"/>
    </conflict>
</comment>
<comment type="sequence caution" evidence="2">
    <conflict type="erroneous initiation">
        <sequence resource="EMBL-CDS" id="CAB37107"/>
    </conflict>
</comment>